<accession>P9WFX7</accession>
<accession>L0T8S6</accession>
<accession>O06129</accession>
<accession>P0A632</accession>
<protein>
    <recommendedName>
        <fullName>Indole-3-glycerol phosphate synthase</fullName>
        <shortName>IGPS</shortName>
        <ecNumber>4.1.1.48</ecNumber>
    </recommendedName>
</protein>
<organism>
    <name type="scientific">Mycobacterium tuberculosis (strain ATCC 25618 / H37Rv)</name>
    <dbReference type="NCBI Taxonomy" id="83332"/>
    <lineage>
        <taxon>Bacteria</taxon>
        <taxon>Bacillati</taxon>
        <taxon>Actinomycetota</taxon>
        <taxon>Actinomycetes</taxon>
        <taxon>Mycobacteriales</taxon>
        <taxon>Mycobacteriaceae</taxon>
        <taxon>Mycobacterium</taxon>
        <taxon>Mycobacterium tuberculosis complex</taxon>
    </lineage>
</organism>
<proteinExistence type="evidence at protein level"/>
<dbReference type="EC" id="4.1.1.48"/>
<dbReference type="EMBL" id="AL123456">
    <property type="protein sequence ID" value="CCP44375.1"/>
    <property type="molecule type" value="Genomic_DNA"/>
</dbReference>
<dbReference type="PIR" id="A70557">
    <property type="entry name" value="A70557"/>
</dbReference>
<dbReference type="RefSeq" id="NP_216127.1">
    <property type="nucleotide sequence ID" value="NC_000962.3"/>
</dbReference>
<dbReference type="RefSeq" id="WP_003407990.1">
    <property type="nucleotide sequence ID" value="NZ_NVQJ01000016.1"/>
</dbReference>
<dbReference type="PDB" id="3QJA">
    <property type="method" value="X-ray"/>
    <property type="resolution" value="1.29 A"/>
    <property type="chains" value="A=1-272"/>
</dbReference>
<dbReference type="PDB" id="3T40">
    <property type="method" value="X-ray"/>
    <property type="resolution" value="1.75 A"/>
    <property type="chains" value="A=1-272"/>
</dbReference>
<dbReference type="PDB" id="3T44">
    <property type="method" value="X-ray"/>
    <property type="resolution" value="1.60 A"/>
    <property type="chains" value="A=1-272"/>
</dbReference>
<dbReference type="PDB" id="3T55">
    <property type="method" value="X-ray"/>
    <property type="resolution" value="2.06 A"/>
    <property type="chains" value="A=1-272"/>
</dbReference>
<dbReference type="PDB" id="3T78">
    <property type="method" value="X-ray"/>
    <property type="resolution" value="1.60 A"/>
    <property type="chains" value="A=1-272"/>
</dbReference>
<dbReference type="PDB" id="4FB7">
    <property type="method" value="X-ray"/>
    <property type="resolution" value="1.30 A"/>
    <property type="chains" value="A=1-272"/>
</dbReference>
<dbReference type="PDBsum" id="3QJA"/>
<dbReference type="PDBsum" id="3T40"/>
<dbReference type="PDBsum" id="3T44"/>
<dbReference type="PDBsum" id="3T55"/>
<dbReference type="PDBsum" id="3T78"/>
<dbReference type="PDBsum" id="4FB7"/>
<dbReference type="SMR" id="P9WFX7"/>
<dbReference type="FunCoup" id="P9WFX7">
    <property type="interactions" value="311"/>
</dbReference>
<dbReference type="STRING" id="83332.Rv1611"/>
<dbReference type="PaxDb" id="83332-Rv1611"/>
<dbReference type="DNASU" id="885294"/>
<dbReference type="GeneID" id="885294"/>
<dbReference type="KEGG" id="mtu:Rv1611"/>
<dbReference type="KEGG" id="mtv:RVBD_1611"/>
<dbReference type="TubercuList" id="Rv1611"/>
<dbReference type="eggNOG" id="COG0134">
    <property type="taxonomic scope" value="Bacteria"/>
</dbReference>
<dbReference type="InParanoid" id="P9WFX7"/>
<dbReference type="OrthoDB" id="9804217at2"/>
<dbReference type="PhylomeDB" id="P9WFX7"/>
<dbReference type="BRENDA" id="4.1.1.48">
    <property type="organism ID" value="3445"/>
</dbReference>
<dbReference type="SABIO-RK" id="P9WFX7"/>
<dbReference type="UniPathway" id="UPA00035">
    <property type="reaction ID" value="UER00043"/>
</dbReference>
<dbReference type="EvolutionaryTrace" id="P9WFX7"/>
<dbReference type="Proteomes" id="UP000001584">
    <property type="component" value="Chromosome"/>
</dbReference>
<dbReference type="GO" id="GO:0009274">
    <property type="term" value="C:peptidoglycan-based cell wall"/>
    <property type="evidence" value="ECO:0007005"/>
    <property type="project" value="MTBBASE"/>
</dbReference>
<dbReference type="GO" id="GO:0005886">
    <property type="term" value="C:plasma membrane"/>
    <property type="evidence" value="ECO:0007005"/>
    <property type="project" value="MTBBASE"/>
</dbReference>
<dbReference type="GO" id="GO:0004425">
    <property type="term" value="F:indole-3-glycerol-phosphate synthase activity"/>
    <property type="evidence" value="ECO:0000314"/>
    <property type="project" value="MTBBASE"/>
</dbReference>
<dbReference type="GO" id="GO:0000287">
    <property type="term" value="F:magnesium ion binding"/>
    <property type="evidence" value="ECO:0000314"/>
    <property type="project" value="MTBBASE"/>
</dbReference>
<dbReference type="GO" id="GO:0004640">
    <property type="term" value="F:phosphoribosylanthranilate isomerase activity"/>
    <property type="evidence" value="ECO:0000318"/>
    <property type="project" value="GO_Central"/>
</dbReference>
<dbReference type="GO" id="GO:0046391">
    <property type="term" value="P:5-phosphoribose 1-diphosphate metabolic process"/>
    <property type="evidence" value="ECO:0000314"/>
    <property type="project" value="MTBBASE"/>
</dbReference>
<dbReference type="GO" id="GO:0000162">
    <property type="term" value="P:L-tryptophan biosynthetic process"/>
    <property type="evidence" value="ECO:0000314"/>
    <property type="project" value="MTBBASE"/>
</dbReference>
<dbReference type="CDD" id="cd00331">
    <property type="entry name" value="IGPS"/>
    <property type="match status" value="1"/>
</dbReference>
<dbReference type="FunFam" id="3.20.20.70:FF:000024">
    <property type="entry name" value="Indole-3-glycerol phosphate synthase"/>
    <property type="match status" value="1"/>
</dbReference>
<dbReference type="Gene3D" id="3.20.20.70">
    <property type="entry name" value="Aldolase class I"/>
    <property type="match status" value="1"/>
</dbReference>
<dbReference type="HAMAP" id="MF_00134_B">
    <property type="entry name" value="IGPS_B"/>
    <property type="match status" value="1"/>
</dbReference>
<dbReference type="InterPro" id="IPR013785">
    <property type="entry name" value="Aldolase_TIM"/>
</dbReference>
<dbReference type="InterPro" id="IPR045186">
    <property type="entry name" value="Indole-3-glycerol_P_synth"/>
</dbReference>
<dbReference type="InterPro" id="IPR013798">
    <property type="entry name" value="Indole-3-glycerol_P_synth_dom"/>
</dbReference>
<dbReference type="InterPro" id="IPR001468">
    <property type="entry name" value="Indole-3-GlycerolPSynthase_CS"/>
</dbReference>
<dbReference type="InterPro" id="IPR011060">
    <property type="entry name" value="RibuloseP-bd_barrel"/>
</dbReference>
<dbReference type="NCBIfam" id="NF001369">
    <property type="entry name" value="PRK00278.1-1"/>
    <property type="match status" value="1"/>
</dbReference>
<dbReference type="NCBIfam" id="NF001377">
    <property type="entry name" value="PRK00278.2-4"/>
    <property type="match status" value="1"/>
</dbReference>
<dbReference type="PANTHER" id="PTHR22854:SF2">
    <property type="entry name" value="INDOLE-3-GLYCEROL-PHOSPHATE SYNTHASE"/>
    <property type="match status" value="1"/>
</dbReference>
<dbReference type="PANTHER" id="PTHR22854">
    <property type="entry name" value="TRYPTOPHAN BIOSYNTHESIS PROTEIN"/>
    <property type="match status" value="1"/>
</dbReference>
<dbReference type="Pfam" id="PF00218">
    <property type="entry name" value="IGPS"/>
    <property type="match status" value="1"/>
</dbReference>
<dbReference type="SUPFAM" id="SSF51366">
    <property type="entry name" value="Ribulose-phoshate binding barrel"/>
    <property type="match status" value="1"/>
</dbReference>
<dbReference type="PROSITE" id="PS00614">
    <property type="entry name" value="IGPS"/>
    <property type="match status" value="1"/>
</dbReference>
<comment type="catalytic activity">
    <reaction>
        <text>1-(2-carboxyphenylamino)-1-deoxy-D-ribulose 5-phosphate + H(+) = (1S,2R)-1-C-(indol-3-yl)glycerol 3-phosphate + CO2 + H2O</text>
        <dbReference type="Rhea" id="RHEA:23476"/>
        <dbReference type="ChEBI" id="CHEBI:15377"/>
        <dbReference type="ChEBI" id="CHEBI:15378"/>
        <dbReference type="ChEBI" id="CHEBI:16526"/>
        <dbReference type="ChEBI" id="CHEBI:58613"/>
        <dbReference type="ChEBI" id="CHEBI:58866"/>
        <dbReference type="EC" id="4.1.1.48"/>
    </reaction>
</comment>
<comment type="pathway">
    <text>Amino-acid biosynthesis; L-tryptophan biosynthesis; L-tryptophan from chorismate: step 4/5.</text>
</comment>
<comment type="miscellaneous">
    <text>Was identified as a high-confidence drug target.</text>
</comment>
<comment type="similarity">
    <text evidence="1">Belongs to the TrpC family.</text>
</comment>
<feature type="chain" id="PRO_0000154234" description="Indole-3-glycerol phosphate synthase">
    <location>
        <begin position="1"/>
        <end position="272"/>
    </location>
</feature>
<feature type="helix" evidence="2">
    <location>
        <begin position="5"/>
        <end position="22"/>
    </location>
</feature>
<feature type="helix" evidence="2">
    <location>
        <begin position="27"/>
        <end position="36"/>
    </location>
</feature>
<feature type="helix" evidence="2">
    <location>
        <begin position="43"/>
        <end position="47"/>
    </location>
</feature>
<feature type="strand" evidence="2">
    <location>
        <begin position="49"/>
        <end position="51"/>
    </location>
</feature>
<feature type="strand" evidence="2">
    <location>
        <begin position="53"/>
        <end position="58"/>
    </location>
</feature>
<feature type="strand" evidence="3">
    <location>
        <begin position="60"/>
        <end position="62"/>
    </location>
</feature>
<feature type="strand" evidence="4">
    <location>
        <begin position="64"/>
        <end position="66"/>
    </location>
</feature>
<feature type="helix" evidence="2">
    <location>
        <begin position="74"/>
        <end position="83"/>
    </location>
</feature>
<feature type="strand" evidence="2">
    <location>
        <begin position="87"/>
        <end position="92"/>
    </location>
</feature>
<feature type="helix" evidence="2">
    <location>
        <begin position="95"/>
        <end position="97"/>
    </location>
</feature>
<feature type="helix" evidence="2">
    <location>
        <begin position="98"/>
        <end position="111"/>
    </location>
</feature>
<feature type="strand" evidence="2">
    <location>
        <begin position="116"/>
        <end position="120"/>
    </location>
</feature>
<feature type="helix" evidence="2">
    <location>
        <begin position="125"/>
        <end position="133"/>
    </location>
</feature>
<feature type="strand" evidence="2">
    <location>
        <begin position="137"/>
        <end position="142"/>
    </location>
</feature>
<feature type="helix" evidence="2">
    <location>
        <begin position="143"/>
        <end position="145"/>
    </location>
</feature>
<feature type="helix" evidence="2">
    <location>
        <begin position="148"/>
        <end position="160"/>
    </location>
</feature>
<feature type="strand" evidence="2">
    <location>
        <begin position="164"/>
        <end position="171"/>
    </location>
</feature>
<feature type="helix" evidence="2">
    <location>
        <begin position="172"/>
        <end position="181"/>
    </location>
</feature>
<feature type="strand" evidence="2">
    <location>
        <begin position="184"/>
        <end position="191"/>
    </location>
</feature>
<feature type="turn" evidence="2">
    <location>
        <begin position="193"/>
        <end position="195"/>
    </location>
</feature>
<feature type="helix" evidence="2">
    <location>
        <begin position="202"/>
        <end position="206"/>
    </location>
</feature>
<feature type="helix" evidence="2">
    <location>
        <begin position="207"/>
        <end position="209"/>
    </location>
</feature>
<feature type="strand" evidence="2">
    <location>
        <begin position="214"/>
        <end position="220"/>
    </location>
</feature>
<feature type="helix" evidence="2">
    <location>
        <begin position="225"/>
        <end position="233"/>
    </location>
</feature>
<feature type="strand" evidence="2">
    <location>
        <begin position="237"/>
        <end position="241"/>
    </location>
</feature>
<feature type="helix" evidence="2">
    <location>
        <begin position="243"/>
        <end position="246"/>
    </location>
</feature>
<feature type="helix" evidence="2">
    <location>
        <begin position="251"/>
        <end position="259"/>
    </location>
</feature>
<feature type="turn" evidence="2">
    <location>
        <begin position="260"/>
        <end position="263"/>
    </location>
</feature>
<evidence type="ECO:0000305" key="1"/>
<evidence type="ECO:0007829" key="2">
    <source>
        <dbReference type="PDB" id="3QJA"/>
    </source>
</evidence>
<evidence type="ECO:0007829" key="3">
    <source>
        <dbReference type="PDB" id="3T44"/>
    </source>
</evidence>
<evidence type="ECO:0007829" key="4">
    <source>
        <dbReference type="PDB" id="4FB7"/>
    </source>
</evidence>
<sequence length="272" mass="28023">MSPATVLDSILEGVRADVAAREASVSLSEIKAAAAAAPPPLDVMAALREPGIGVIAEVKRASPSAGALATIADPAKLAQAYQDGGARIVSVVTEQRRFQGSLDDLDAVRASVSIPVLRKDFVVQPYQIHEARAHGADMLLLIVAALEQSVLVSMLDRTESLGMTALVEVHTEQEADRALKAGAKVIGVNARDLMTLDVDRDCFARIAPGLPSSVIRIAESGVRGTADLLAYAGAGADAVLVGEGLVTSGDPRAAVADLVTAGTHPSCPKPAR</sequence>
<reference key="1">
    <citation type="journal article" date="1998" name="Nature">
        <title>Deciphering the biology of Mycobacterium tuberculosis from the complete genome sequence.</title>
        <authorList>
            <person name="Cole S.T."/>
            <person name="Brosch R."/>
            <person name="Parkhill J."/>
            <person name="Garnier T."/>
            <person name="Churcher C.M."/>
            <person name="Harris D.E."/>
            <person name="Gordon S.V."/>
            <person name="Eiglmeier K."/>
            <person name="Gas S."/>
            <person name="Barry C.E. III"/>
            <person name="Tekaia F."/>
            <person name="Badcock K."/>
            <person name="Basham D."/>
            <person name="Brown D."/>
            <person name="Chillingworth T."/>
            <person name="Connor R."/>
            <person name="Davies R.M."/>
            <person name="Devlin K."/>
            <person name="Feltwell T."/>
            <person name="Gentles S."/>
            <person name="Hamlin N."/>
            <person name="Holroyd S."/>
            <person name="Hornsby T."/>
            <person name="Jagels K."/>
            <person name="Krogh A."/>
            <person name="McLean J."/>
            <person name="Moule S."/>
            <person name="Murphy L.D."/>
            <person name="Oliver S."/>
            <person name="Osborne J."/>
            <person name="Quail M.A."/>
            <person name="Rajandream M.A."/>
            <person name="Rogers J."/>
            <person name="Rutter S."/>
            <person name="Seeger K."/>
            <person name="Skelton S."/>
            <person name="Squares S."/>
            <person name="Squares R."/>
            <person name="Sulston J.E."/>
            <person name="Taylor K."/>
            <person name="Whitehead S."/>
            <person name="Barrell B.G."/>
        </authorList>
    </citation>
    <scope>NUCLEOTIDE SEQUENCE [LARGE SCALE GENOMIC DNA]</scope>
    <source>
        <strain>ATCC 25618 / H37Rv</strain>
    </source>
</reference>
<reference key="2">
    <citation type="journal article" date="2008" name="BMC Syst. Biol.">
        <title>targetTB: a target identification pipeline for Mycobacterium tuberculosis through an interactome, reactome and genome-scale structural analysis.</title>
        <authorList>
            <person name="Raman K."/>
            <person name="Yeturu K."/>
            <person name="Chandra N."/>
        </authorList>
    </citation>
    <scope>IDENTIFICATION AS A DRUG TARGET [LARGE SCALE ANALYSIS]</scope>
</reference>
<reference key="3">
    <citation type="journal article" date="2011" name="Mol. Cell. Proteomics">
        <title>Proteogenomic analysis of Mycobacterium tuberculosis by high resolution mass spectrometry.</title>
        <authorList>
            <person name="Kelkar D.S."/>
            <person name="Kumar D."/>
            <person name="Kumar P."/>
            <person name="Balakrishnan L."/>
            <person name="Muthusamy B."/>
            <person name="Yadav A.K."/>
            <person name="Shrivastava P."/>
            <person name="Marimuthu A."/>
            <person name="Anand S."/>
            <person name="Sundaram H."/>
            <person name="Kingsbury R."/>
            <person name="Harsha H.C."/>
            <person name="Nair B."/>
            <person name="Prasad T.S."/>
            <person name="Chauhan D.S."/>
            <person name="Katoch K."/>
            <person name="Katoch V.M."/>
            <person name="Kumar P."/>
            <person name="Chaerkady R."/>
            <person name="Ramachandran S."/>
            <person name="Dash D."/>
            <person name="Pandey A."/>
        </authorList>
    </citation>
    <scope>IDENTIFICATION BY MASS SPECTROMETRY [LARGE SCALE ANALYSIS]</scope>
    <source>
        <strain>ATCC 25618 / H37Rv</strain>
    </source>
</reference>
<keyword id="KW-0002">3D-structure</keyword>
<keyword id="KW-0028">Amino-acid biosynthesis</keyword>
<keyword id="KW-0057">Aromatic amino acid biosynthesis</keyword>
<keyword id="KW-0210">Decarboxylase</keyword>
<keyword id="KW-0456">Lyase</keyword>
<keyword id="KW-1185">Reference proteome</keyword>
<keyword id="KW-0822">Tryptophan biosynthesis</keyword>
<name>TRPC_MYCTU</name>
<gene>
    <name type="primary">trpC</name>
    <name type="ordered locus">Rv1611</name>
    <name type="ORF">MTCY01B2.03</name>
</gene>